<reference key="1">
    <citation type="journal article" date="2004" name="Nat. Genet.">
        <title>Comparison of genome degradation in Paratyphi A and Typhi, human-restricted serovars of Salmonella enterica that cause typhoid.</title>
        <authorList>
            <person name="McClelland M."/>
            <person name="Sanderson K.E."/>
            <person name="Clifton S.W."/>
            <person name="Latreille P."/>
            <person name="Porwollik S."/>
            <person name="Sabo A."/>
            <person name="Meyer R."/>
            <person name="Bieri T."/>
            <person name="Ozersky P."/>
            <person name="McLellan M."/>
            <person name="Harkins C.R."/>
            <person name="Wang C."/>
            <person name="Nguyen C."/>
            <person name="Berghoff A."/>
            <person name="Elliott G."/>
            <person name="Kohlberg S."/>
            <person name="Strong C."/>
            <person name="Du F."/>
            <person name="Carter J."/>
            <person name="Kremizki C."/>
            <person name="Layman D."/>
            <person name="Leonard S."/>
            <person name="Sun H."/>
            <person name="Fulton L."/>
            <person name="Nash W."/>
            <person name="Miner T."/>
            <person name="Minx P."/>
            <person name="Delehaunty K."/>
            <person name="Fronick C."/>
            <person name="Magrini V."/>
            <person name="Nhan M."/>
            <person name="Warren W."/>
            <person name="Florea L."/>
            <person name="Spieth J."/>
            <person name="Wilson R.K."/>
        </authorList>
    </citation>
    <scope>NUCLEOTIDE SEQUENCE [LARGE SCALE GENOMIC DNA]</scope>
    <source>
        <strain>ATCC 9150 / SARB42</strain>
    </source>
</reference>
<protein>
    <recommendedName>
        <fullName evidence="1">tRNA-2-methylthio-N(6)-dimethylallyladenosine synthase</fullName>
        <ecNumber evidence="1">2.8.4.3</ecNumber>
    </recommendedName>
    <alternativeName>
        <fullName evidence="1">(Dimethylallyl)adenosine tRNA methylthiotransferase MiaB</fullName>
    </alternativeName>
    <alternativeName>
        <fullName evidence="1">tRNA-i(6)A37 methylthiotransferase</fullName>
    </alternativeName>
</protein>
<accession>Q5PLT0</accession>
<proteinExistence type="inferred from homology"/>
<dbReference type="EC" id="2.8.4.3" evidence="1"/>
<dbReference type="EMBL" id="CP000026">
    <property type="protein sequence ID" value="AAV77964.1"/>
    <property type="status" value="ALT_INIT"/>
    <property type="molecule type" value="Genomic_DNA"/>
</dbReference>
<dbReference type="RefSeq" id="WP_016505467.1">
    <property type="nucleotide sequence ID" value="NC_006511.1"/>
</dbReference>
<dbReference type="SMR" id="Q5PLT0"/>
<dbReference type="KEGG" id="spt:SPA2070"/>
<dbReference type="HOGENOM" id="CLU_018697_2_0_6"/>
<dbReference type="Proteomes" id="UP000008185">
    <property type="component" value="Chromosome"/>
</dbReference>
<dbReference type="GO" id="GO:0005829">
    <property type="term" value="C:cytosol"/>
    <property type="evidence" value="ECO:0007669"/>
    <property type="project" value="TreeGrafter"/>
</dbReference>
<dbReference type="GO" id="GO:0051539">
    <property type="term" value="F:4 iron, 4 sulfur cluster binding"/>
    <property type="evidence" value="ECO:0007669"/>
    <property type="project" value="UniProtKB-UniRule"/>
</dbReference>
<dbReference type="GO" id="GO:0046872">
    <property type="term" value="F:metal ion binding"/>
    <property type="evidence" value="ECO:0007669"/>
    <property type="project" value="UniProtKB-KW"/>
</dbReference>
<dbReference type="GO" id="GO:0035597">
    <property type="term" value="F:N6-isopentenyladenosine methylthiotransferase activity"/>
    <property type="evidence" value="ECO:0007669"/>
    <property type="project" value="TreeGrafter"/>
</dbReference>
<dbReference type="CDD" id="cd01335">
    <property type="entry name" value="Radical_SAM"/>
    <property type="match status" value="1"/>
</dbReference>
<dbReference type="FunFam" id="3.40.50.12160:FF:000001">
    <property type="entry name" value="tRNA-2-methylthio-N(6)-dimethylallyladenosine synthase"/>
    <property type="match status" value="1"/>
</dbReference>
<dbReference type="FunFam" id="3.80.30.20:FF:000001">
    <property type="entry name" value="tRNA-2-methylthio-N(6)-dimethylallyladenosine synthase 2"/>
    <property type="match status" value="1"/>
</dbReference>
<dbReference type="Gene3D" id="3.40.50.12160">
    <property type="entry name" value="Methylthiotransferase, N-terminal domain"/>
    <property type="match status" value="1"/>
</dbReference>
<dbReference type="Gene3D" id="3.80.30.20">
    <property type="entry name" value="tm_1862 like domain"/>
    <property type="match status" value="1"/>
</dbReference>
<dbReference type="HAMAP" id="MF_01864">
    <property type="entry name" value="tRNA_metthiotr_MiaB"/>
    <property type="match status" value="1"/>
</dbReference>
<dbReference type="InterPro" id="IPR006638">
    <property type="entry name" value="Elp3/MiaA/NifB-like_rSAM"/>
</dbReference>
<dbReference type="InterPro" id="IPR005839">
    <property type="entry name" value="Methylthiotransferase"/>
</dbReference>
<dbReference type="InterPro" id="IPR020612">
    <property type="entry name" value="Methylthiotransferase_CS"/>
</dbReference>
<dbReference type="InterPro" id="IPR013848">
    <property type="entry name" value="Methylthiotransferase_N"/>
</dbReference>
<dbReference type="InterPro" id="IPR038135">
    <property type="entry name" value="Methylthiotransferase_N_sf"/>
</dbReference>
<dbReference type="InterPro" id="IPR006463">
    <property type="entry name" value="MiaB_methiolase"/>
</dbReference>
<dbReference type="InterPro" id="IPR007197">
    <property type="entry name" value="rSAM"/>
</dbReference>
<dbReference type="InterPro" id="IPR023404">
    <property type="entry name" value="rSAM_horseshoe"/>
</dbReference>
<dbReference type="InterPro" id="IPR002792">
    <property type="entry name" value="TRAM_dom"/>
</dbReference>
<dbReference type="NCBIfam" id="TIGR01574">
    <property type="entry name" value="miaB-methiolase"/>
    <property type="match status" value="1"/>
</dbReference>
<dbReference type="NCBIfam" id="TIGR00089">
    <property type="entry name" value="MiaB/RimO family radical SAM methylthiotransferase"/>
    <property type="match status" value="1"/>
</dbReference>
<dbReference type="PANTHER" id="PTHR43020">
    <property type="entry name" value="CDK5 REGULATORY SUBUNIT-ASSOCIATED PROTEIN 1"/>
    <property type="match status" value="1"/>
</dbReference>
<dbReference type="PANTHER" id="PTHR43020:SF2">
    <property type="entry name" value="MITOCHONDRIAL TRNA METHYLTHIOTRANSFERASE CDK5RAP1"/>
    <property type="match status" value="1"/>
</dbReference>
<dbReference type="Pfam" id="PF04055">
    <property type="entry name" value="Radical_SAM"/>
    <property type="match status" value="1"/>
</dbReference>
<dbReference type="Pfam" id="PF01938">
    <property type="entry name" value="TRAM"/>
    <property type="match status" value="1"/>
</dbReference>
<dbReference type="Pfam" id="PF00919">
    <property type="entry name" value="UPF0004"/>
    <property type="match status" value="1"/>
</dbReference>
<dbReference type="SFLD" id="SFLDF00273">
    <property type="entry name" value="(dimethylallyl)adenosine_tRNA"/>
    <property type="match status" value="1"/>
</dbReference>
<dbReference type="SFLD" id="SFLDG01082">
    <property type="entry name" value="B12-binding_domain_containing"/>
    <property type="match status" value="1"/>
</dbReference>
<dbReference type="SFLD" id="SFLDS00029">
    <property type="entry name" value="Radical_SAM"/>
    <property type="match status" value="1"/>
</dbReference>
<dbReference type="SMART" id="SM00729">
    <property type="entry name" value="Elp3"/>
    <property type="match status" value="1"/>
</dbReference>
<dbReference type="SUPFAM" id="SSF102114">
    <property type="entry name" value="Radical SAM enzymes"/>
    <property type="match status" value="1"/>
</dbReference>
<dbReference type="PROSITE" id="PS51449">
    <property type="entry name" value="MTTASE_N"/>
    <property type="match status" value="1"/>
</dbReference>
<dbReference type="PROSITE" id="PS01278">
    <property type="entry name" value="MTTASE_RADICAL"/>
    <property type="match status" value="1"/>
</dbReference>
<dbReference type="PROSITE" id="PS51918">
    <property type="entry name" value="RADICAL_SAM"/>
    <property type="match status" value="1"/>
</dbReference>
<dbReference type="PROSITE" id="PS50926">
    <property type="entry name" value="TRAM"/>
    <property type="match status" value="1"/>
</dbReference>
<name>MIAB_SALPA</name>
<keyword id="KW-0004">4Fe-4S</keyword>
<keyword id="KW-0963">Cytoplasm</keyword>
<keyword id="KW-0408">Iron</keyword>
<keyword id="KW-0411">Iron-sulfur</keyword>
<keyword id="KW-0479">Metal-binding</keyword>
<keyword id="KW-0949">S-adenosyl-L-methionine</keyword>
<keyword id="KW-0808">Transferase</keyword>
<keyword id="KW-0819">tRNA processing</keyword>
<feature type="chain" id="PRO_0000374527" description="tRNA-2-methylthio-N(6)-dimethylallyladenosine synthase">
    <location>
        <begin position="1"/>
        <end position="474"/>
    </location>
</feature>
<feature type="domain" description="MTTase N-terminal" evidence="1">
    <location>
        <begin position="3"/>
        <end position="120"/>
    </location>
</feature>
<feature type="domain" description="Radical SAM core" evidence="2">
    <location>
        <begin position="143"/>
        <end position="375"/>
    </location>
</feature>
<feature type="domain" description="TRAM" evidence="1">
    <location>
        <begin position="378"/>
        <end position="441"/>
    </location>
</feature>
<feature type="binding site" evidence="1">
    <location>
        <position position="12"/>
    </location>
    <ligand>
        <name>[4Fe-4S] cluster</name>
        <dbReference type="ChEBI" id="CHEBI:49883"/>
        <label>1</label>
    </ligand>
</feature>
<feature type="binding site" evidence="1">
    <location>
        <position position="49"/>
    </location>
    <ligand>
        <name>[4Fe-4S] cluster</name>
        <dbReference type="ChEBI" id="CHEBI:49883"/>
        <label>1</label>
    </ligand>
</feature>
<feature type="binding site" evidence="1">
    <location>
        <position position="83"/>
    </location>
    <ligand>
        <name>[4Fe-4S] cluster</name>
        <dbReference type="ChEBI" id="CHEBI:49883"/>
        <label>1</label>
    </ligand>
</feature>
<feature type="binding site" evidence="1">
    <location>
        <position position="157"/>
    </location>
    <ligand>
        <name>[4Fe-4S] cluster</name>
        <dbReference type="ChEBI" id="CHEBI:49883"/>
        <label>2</label>
        <note>4Fe-4S-S-AdoMet</note>
    </ligand>
</feature>
<feature type="binding site" evidence="1">
    <location>
        <position position="161"/>
    </location>
    <ligand>
        <name>[4Fe-4S] cluster</name>
        <dbReference type="ChEBI" id="CHEBI:49883"/>
        <label>2</label>
        <note>4Fe-4S-S-AdoMet</note>
    </ligand>
</feature>
<feature type="binding site" evidence="1">
    <location>
        <position position="164"/>
    </location>
    <ligand>
        <name>[4Fe-4S] cluster</name>
        <dbReference type="ChEBI" id="CHEBI:49883"/>
        <label>2</label>
        <note>4Fe-4S-S-AdoMet</note>
    </ligand>
</feature>
<sequence length="474" mass="53690">MTKKLHIKTWGCQMNEYDSSKMADLLDATHGYQLTDVAEEADVLLLNTCSIREKAQEKVFHQLGRWRLLKEKNPDLIIGVGGCVASQEGEHIRQRAHYVDIIFGPQTSHRLPEMINSVRGDRSPVVDISFPEIEKFDRLPEPRAEGPTAFVSIMEGCNKYCTYCVVPYTRGEEVSRPSDDILFEIAQLAAQGVREVNLLGQNVNAWRGENYDGTTGTFADLLRLVAAIDGIDRIRFTTSHPIEFTDDIIEVYRDTPELVSFLHLPVQSGSDRVLNLMGRTHTALEYKAIIRKLRAARPDIQISSDFIVGFPGETTDDFEKTMKLIADVNFDMSYSFIFSARPGTPAADMVDDVPEEEKKQRLYILQERINQQAMAWSRRMLGTTQRILVEGTSRKNIMELSGRTENNRVVNFEGTPEMIGKFVDVEITDVYPNSLRGKVVRTEDEMGLRVAETPESVIARTRKENELGVGFYQP</sequence>
<evidence type="ECO:0000255" key="1">
    <source>
        <dbReference type="HAMAP-Rule" id="MF_01864"/>
    </source>
</evidence>
<evidence type="ECO:0000255" key="2">
    <source>
        <dbReference type="PROSITE-ProRule" id="PRU01266"/>
    </source>
</evidence>
<evidence type="ECO:0000305" key="3"/>
<gene>
    <name evidence="1" type="primary">miaB</name>
    <name type="ordered locus">SPA2070</name>
</gene>
<organism>
    <name type="scientific">Salmonella paratyphi A (strain ATCC 9150 / SARB42)</name>
    <dbReference type="NCBI Taxonomy" id="295319"/>
    <lineage>
        <taxon>Bacteria</taxon>
        <taxon>Pseudomonadati</taxon>
        <taxon>Pseudomonadota</taxon>
        <taxon>Gammaproteobacteria</taxon>
        <taxon>Enterobacterales</taxon>
        <taxon>Enterobacteriaceae</taxon>
        <taxon>Salmonella</taxon>
    </lineage>
</organism>
<comment type="function">
    <text evidence="1">Catalyzes the methylthiolation of N6-(dimethylallyl)adenosine (i(6)A), leading to the formation of 2-methylthio-N6-(dimethylallyl)adenosine (ms(2)i(6)A) at position 37 in tRNAs that read codons beginning with uridine.</text>
</comment>
<comment type="catalytic activity">
    <reaction evidence="1">
        <text>N(6)-dimethylallyladenosine(37) in tRNA + (sulfur carrier)-SH + AH2 + 2 S-adenosyl-L-methionine = 2-methylsulfanyl-N(6)-dimethylallyladenosine(37) in tRNA + (sulfur carrier)-H + 5'-deoxyadenosine + L-methionine + A + S-adenosyl-L-homocysteine + 2 H(+)</text>
        <dbReference type="Rhea" id="RHEA:37067"/>
        <dbReference type="Rhea" id="RHEA-COMP:10375"/>
        <dbReference type="Rhea" id="RHEA-COMP:10376"/>
        <dbReference type="Rhea" id="RHEA-COMP:14737"/>
        <dbReference type="Rhea" id="RHEA-COMP:14739"/>
        <dbReference type="ChEBI" id="CHEBI:13193"/>
        <dbReference type="ChEBI" id="CHEBI:15378"/>
        <dbReference type="ChEBI" id="CHEBI:17319"/>
        <dbReference type="ChEBI" id="CHEBI:17499"/>
        <dbReference type="ChEBI" id="CHEBI:29917"/>
        <dbReference type="ChEBI" id="CHEBI:57844"/>
        <dbReference type="ChEBI" id="CHEBI:57856"/>
        <dbReference type="ChEBI" id="CHEBI:59789"/>
        <dbReference type="ChEBI" id="CHEBI:64428"/>
        <dbReference type="ChEBI" id="CHEBI:74415"/>
        <dbReference type="ChEBI" id="CHEBI:74417"/>
        <dbReference type="EC" id="2.8.4.3"/>
    </reaction>
</comment>
<comment type="cofactor">
    <cofactor evidence="1">
        <name>[4Fe-4S] cluster</name>
        <dbReference type="ChEBI" id="CHEBI:49883"/>
    </cofactor>
    <text evidence="1">Binds 2 [4Fe-4S] clusters. One cluster is coordinated with 3 cysteines and an exchangeable S-adenosyl-L-methionine.</text>
</comment>
<comment type="subunit">
    <text evidence="1">Monomer.</text>
</comment>
<comment type="subcellular location">
    <subcellularLocation>
        <location evidence="1">Cytoplasm</location>
    </subcellularLocation>
</comment>
<comment type="similarity">
    <text evidence="1">Belongs to the methylthiotransferase family. MiaB subfamily.</text>
</comment>
<comment type="sequence caution" evidence="3">
    <conflict type="erroneous initiation">
        <sequence resource="EMBL-CDS" id="AAV77964"/>
    </conflict>
</comment>